<comment type="function">
    <text evidence="1">NAD-binding protein involved in the addition of a carboxymethylaminomethyl (cmnm) group at the wobble position (U34) of certain tRNAs, forming tRNA-cmnm(5)s(2)U34.</text>
</comment>
<comment type="cofactor">
    <cofactor evidence="1">
        <name>FAD</name>
        <dbReference type="ChEBI" id="CHEBI:57692"/>
    </cofactor>
</comment>
<comment type="subunit">
    <text evidence="1">Homodimer. Heterotetramer of two MnmE and two MnmG subunits.</text>
</comment>
<comment type="subcellular location">
    <subcellularLocation>
        <location evidence="1">Cytoplasm</location>
    </subcellularLocation>
</comment>
<comment type="similarity">
    <text evidence="1">Belongs to the MnmG family.</text>
</comment>
<protein>
    <recommendedName>
        <fullName evidence="1">tRNA uridine 5-carboxymethylaminomethyl modification enzyme MnmG</fullName>
    </recommendedName>
    <alternativeName>
        <fullName evidence="1">Glucose-inhibited division protein A</fullName>
    </alternativeName>
</protein>
<reference key="1">
    <citation type="journal article" date="2007" name="PLoS ONE">
        <title>Analysis of the neurotoxin complex genes in Clostridium botulinum A1-A4 and B1 strains: BoNT/A3, /Ba4 and /B1 clusters are located within plasmids.</title>
        <authorList>
            <person name="Smith T.J."/>
            <person name="Hill K.K."/>
            <person name="Foley B.T."/>
            <person name="Detter J.C."/>
            <person name="Munk A.C."/>
            <person name="Bruce D.C."/>
            <person name="Doggett N.A."/>
            <person name="Smith L.A."/>
            <person name="Marks J.D."/>
            <person name="Xie G."/>
            <person name="Brettin T.S."/>
        </authorList>
    </citation>
    <scope>NUCLEOTIDE SEQUENCE [LARGE SCALE GENOMIC DNA]</scope>
    <source>
        <strain>Loch Maree / Type A3</strain>
    </source>
</reference>
<accession>B1KUB1</accession>
<keyword id="KW-0963">Cytoplasm</keyword>
<keyword id="KW-0274">FAD</keyword>
<keyword id="KW-0285">Flavoprotein</keyword>
<keyword id="KW-0520">NAD</keyword>
<keyword id="KW-0819">tRNA processing</keyword>
<name>MNMG_CLOBM</name>
<dbReference type="EMBL" id="CP000962">
    <property type="protein sequence ID" value="ACA55923.1"/>
    <property type="molecule type" value="Genomic_DNA"/>
</dbReference>
<dbReference type="RefSeq" id="WP_012343844.1">
    <property type="nucleotide sequence ID" value="NC_010520.1"/>
</dbReference>
<dbReference type="SMR" id="B1KUB1"/>
<dbReference type="KEGG" id="cbl:CLK_3126"/>
<dbReference type="HOGENOM" id="CLU_007831_2_2_9"/>
<dbReference type="GO" id="GO:0005829">
    <property type="term" value="C:cytosol"/>
    <property type="evidence" value="ECO:0007669"/>
    <property type="project" value="TreeGrafter"/>
</dbReference>
<dbReference type="GO" id="GO:0050660">
    <property type="term" value="F:flavin adenine dinucleotide binding"/>
    <property type="evidence" value="ECO:0007669"/>
    <property type="project" value="UniProtKB-UniRule"/>
</dbReference>
<dbReference type="GO" id="GO:0030488">
    <property type="term" value="P:tRNA methylation"/>
    <property type="evidence" value="ECO:0007669"/>
    <property type="project" value="TreeGrafter"/>
</dbReference>
<dbReference type="GO" id="GO:0002098">
    <property type="term" value="P:tRNA wobble uridine modification"/>
    <property type="evidence" value="ECO:0007669"/>
    <property type="project" value="InterPro"/>
</dbReference>
<dbReference type="FunFam" id="1.10.10.1800:FF:000001">
    <property type="entry name" value="tRNA uridine 5-carboxymethylaminomethyl modification enzyme MnmG"/>
    <property type="match status" value="1"/>
</dbReference>
<dbReference type="FunFam" id="1.10.150.570:FF:000001">
    <property type="entry name" value="tRNA uridine 5-carboxymethylaminomethyl modification enzyme MnmG"/>
    <property type="match status" value="1"/>
</dbReference>
<dbReference type="FunFam" id="3.50.50.60:FF:000002">
    <property type="entry name" value="tRNA uridine 5-carboxymethylaminomethyl modification enzyme MnmG"/>
    <property type="match status" value="1"/>
</dbReference>
<dbReference type="FunFam" id="3.50.50.60:FF:000063">
    <property type="entry name" value="tRNA uridine 5-carboxymethylaminomethyl modification enzyme MnmG"/>
    <property type="match status" value="1"/>
</dbReference>
<dbReference type="Gene3D" id="3.50.50.60">
    <property type="entry name" value="FAD/NAD(P)-binding domain"/>
    <property type="match status" value="2"/>
</dbReference>
<dbReference type="Gene3D" id="1.10.150.570">
    <property type="entry name" value="GidA associated domain, C-terminal subdomain"/>
    <property type="match status" value="1"/>
</dbReference>
<dbReference type="Gene3D" id="1.10.10.1800">
    <property type="entry name" value="tRNA uridine 5-carboxymethylaminomethyl modification enzyme MnmG/GidA"/>
    <property type="match status" value="1"/>
</dbReference>
<dbReference type="HAMAP" id="MF_00129">
    <property type="entry name" value="MnmG_GidA"/>
    <property type="match status" value="1"/>
</dbReference>
<dbReference type="InterPro" id="IPR036188">
    <property type="entry name" value="FAD/NAD-bd_sf"/>
</dbReference>
<dbReference type="InterPro" id="IPR049312">
    <property type="entry name" value="GIDA_C_N"/>
</dbReference>
<dbReference type="InterPro" id="IPR004416">
    <property type="entry name" value="MnmG"/>
</dbReference>
<dbReference type="InterPro" id="IPR002218">
    <property type="entry name" value="MnmG-rel"/>
</dbReference>
<dbReference type="InterPro" id="IPR020595">
    <property type="entry name" value="MnmG-rel_CS"/>
</dbReference>
<dbReference type="InterPro" id="IPR026904">
    <property type="entry name" value="MnmG_C"/>
</dbReference>
<dbReference type="InterPro" id="IPR047001">
    <property type="entry name" value="MnmG_C_subdom"/>
</dbReference>
<dbReference type="InterPro" id="IPR044920">
    <property type="entry name" value="MnmG_C_subdom_sf"/>
</dbReference>
<dbReference type="InterPro" id="IPR040131">
    <property type="entry name" value="MnmG_N"/>
</dbReference>
<dbReference type="NCBIfam" id="TIGR00136">
    <property type="entry name" value="mnmG_gidA"/>
    <property type="match status" value="1"/>
</dbReference>
<dbReference type="PANTHER" id="PTHR11806">
    <property type="entry name" value="GLUCOSE INHIBITED DIVISION PROTEIN A"/>
    <property type="match status" value="1"/>
</dbReference>
<dbReference type="PANTHER" id="PTHR11806:SF0">
    <property type="entry name" value="PROTEIN MTO1 HOMOLOG, MITOCHONDRIAL"/>
    <property type="match status" value="1"/>
</dbReference>
<dbReference type="Pfam" id="PF01134">
    <property type="entry name" value="GIDA"/>
    <property type="match status" value="1"/>
</dbReference>
<dbReference type="Pfam" id="PF21680">
    <property type="entry name" value="GIDA_C_1st"/>
    <property type="match status" value="1"/>
</dbReference>
<dbReference type="Pfam" id="PF13932">
    <property type="entry name" value="SAM_GIDA_C"/>
    <property type="match status" value="1"/>
</dbReference>
<dbReference type="PRINTS" id="PR00411">
    <property type="entry name" value="PNDRDTASEI"/>
</dbReference>
<dbReference type="SMART" id="SM01228">
    <property type="entry name" value="GIDA_assoc_3"/>
    <property type="match status" value="1"/>
</dbReference>
<dbReference type="SUPFAM" id="SSF51905">
    <property type="entry name" value="FAD/NAD(P)-binding domain"/>
    <property type="match status" value="1"/>
</dbReference>
<dbReference type="PROSITE" id="PS01280">
    <property type="entry name" value="GIDA_1"/>
    <property type="match status" value="1"/>
</dbReference>
<dbReference type="PROSITE" id="PS01281">
    <property type="entry name" value="GIDA_2"/>
    <property type="match status" value="1"/>
</dbReference>
<evidence type="ECO:0000255" key="1">
    <source>
        <dbReference type="HAMAP-Rule" id="MF_00129"/>
    </source>
</evidence>
<proteinExistence type="inferred from homology"/>
<gene>
    <name evidence="1" type="primary">mnmG</name>
    <name evidence="1" type="synonym">gidA</name>
    <name type="ordered locus">CLK_3126</name>
</gene>
<organism>
    <name type="scientific">Clostridium botulinum (strain Loch Maree / Type A3)</name>
    <dbReference type="NCBI Taxonomy" id="498214"/>
    <lineage>
        <taxon>Bacteria</taxon>
        <taxon>Bacillati</taxon>
        <taxon>Bacillota</taxon>
        <taxon>Clostridia</taxon>
        <taxon>Eubacteriales</taxon>
        <taxon>Clostridiaceae</taxon>
        <taxon>Clostridium</taxon>
    </lineage>
</organism>
<sequence>MKYLAGDFDVVVIGAGHAGCEAALASARMGCKTLICTMNLDSIALMACNPNIGGTAKGHLVREIDALGGEMGINIDHTFIQSRMLNTSKGPAVHSLRAQADKKRYSERMKHLLEKEENVVLRQLEVIEIDVEDNEVKGVLTKNGAYFTTKAIILCTGTYLKGKIIIGDIIYSSGPSGLYPANDLSQSLLDLGINLRRFKTGTPARINKRSVDFSKMVEQPGDEKIVPFSFIHDKLDKDQISCYLTYTSEETHKIIHENIHRSPLYNGSIEGIGPRYCPSIEDKIVRFPDKDKHQIFIEPEGENTEELYVGGMSSSLPEDVQIKMYRSVPGLENAEILRTAYAIEYDCIDPQQLDLTLEFKNINGLYGAGQFNGSSGYEEAAAQGLVAGINAVLKIKGKDPLILKRSDAYIGVLIDDLVTKGTNEPYRMMTSRAEYRLLLRQDNADLRLTEMGYRIGLVKEDRYNKYLNRKKNVENEIERIKKVQITGKKEINEFLLEKGSTELKKPISLYELIKRPELDYFKVEPLDDKRPNLSDDEKEEINIIAKYEGYINKQLEQVEQFKKYENRLIPKSINYSDIKGLRIEAIQKLEKIKPINIGQASRISGVSPADISVLLIYMERKNREN</sequence>
<feature type="chain" id="PRO_0000345258" description="tRNA uridine 5-carboxymethylaminomethyl modification enzyme MnmG">
    <location>
        <begin position="1"/>
        <end position="625"/>
    </location>
</feature>
<feature type="binding site" evidence="1">
    <location>
        <begin position="14"/>
        <end position="19"/>
    </location>
    <ligand>
        <name>FAD</name>
        <dbReference type="ChEBI" id="CHEBI:57692"/>
    </ligand>
</feature>
<feature type="binding site" evidence="1">
    <location>
        <begin position="273"/>
        <end position="287"/>
    </location>
    <ligand>
        <name>NAD(+)</name>
        <dbReference type="ChEBI" id="CHEBI:57540"/>
    </ligand>
</feature>